<dbReference type="EC" id="1.97.1.1"/>
<dbReference type="BRENDA" id="1.97.1.1">
    <property type="organism ID" value="7803"/>
</dbReference>
<dbReference type="GO" id="GO:0005737">
    <property type="term" value="C:cytoplasm"/>
    <property type="evidence" value="ECO:0007669"/>
    <property type="project" value="UniProtKB-SubCell"/>
</dbReference>
<dbReference type="GO" id="GO:0051539">
    <property type="term" value="F:4 iron, 4 sulfur cluster binding"/>
    <property type="evidence" value="ECO:0007669"/>
    <property type="project" value="UniProtKB-KW"/>
</dbReference>
<dbReference type="GO" id="GO:0047143">
    <property type="term" value="F:chlorate reductase activity"/>
    <property type="evidence" value="ECO:0007669"/>
    <property type="project" value="UniProtKB-EC"/>
</dbReference>
<dbReference type="GO" id="GO:0046872">
    <property type="term" value="F:metal ion binding"/>
    <property type="evidence" value="ECO:0007669"/>
    <property type="project" value="UniProtKB-KW"/>
</dbReference>
<name>CLRA_STUCH</name>
<comment type="function">
    <text evidence="2">Reduces chlorate and bromate.</text>
</comment>
<comment type="catalytic activity">
    <reaction evidence="2">
        <text>chlorate + AH2 = chlorite + A + H2O</text>
        <dbReference type="Rhea" id="RHEA:16349"/>
        <dbReference type="ChEBI" id="CHEBI:13193"/>
        <dbReference type="ChEBI" id="CHEBI:15377"/>
        <dbReference type="ChEBI" id="CHEBI:17441"/>
        <dbReference type="ChEBI" id="CHEBI:17499"/>
        <dbReference type="ChEBI" id="CHEBI:49709"/>
        <dbReference type="EC" id="1.97.1.1"/>
    </reaction>
</comment>
<comment type="cofactor">
    <cofactor evidence="1">
        <name>[4Fe-4S] cluster</name>
        <dbReference type="ChEBI" id="CHEBI:49883"/>
    </cofactor>
    <text evidence="1">Binds 1 [4Fe-4S] cluster.</text>
</comment>
<comment type="cofactor">
    <cofactor evidence="3">
        <name>Mo-bis(molybdopterin guanine dinucleotide)</name>
        <dbReference type="ChEBI" id="CHEBI:60539"/>
    </cofactor>
    <text evidence="3">Binds 1 molybdenum-bis(molybdopterin guanine dinucleotide) (Mo-bis-MGD) cofactor per subunit.</text>
</comment>
<comment type="biophysicochemical properties">
    <kinetics>
        <KM>159 uM for chlorate</KM>
        <Vmax>51.0 umol/min/mg enzyme</Vmax>
    </kinetics>
    <phDependence>
        <text>Optimum pH is 7.5.</text>
    </phDependence>
</comment>
<comment type="subunit">
    <text evidence="2">Heterotrimer of alpha, beta and gamma subunits.</text>
</comment>
<comment type="subcellular location">
    <subcellularLocation>
        <location evidence="2">Cytoplasm</location>
    </subcellularLocation>
</comment>
<feature type="chain" id="PRO_0000089870" description="Chlorate reductase subunit alpha">
    <location>
        <begin position="1"/>
        <end position="19" status="greater than"/>
    </location>
</feature>
<feature type="non-terminal residue">
    <location>
        <position position="19"/>
    </location>
</feature>
<reference key="1">
    <citation type="journal article" date="2003" name="J. Bacteriol.">
        <title>Characterization of the chlorate reductase from Pseudomonas chloritidismutans.</title>
        <authorList>
            <person name="Wolterink A.F.W.M."/>
            <person name="Schiltz E."/>
            <person name="Hagedoorn P.-L."/>
            <person name="Hagen W.R."/>
            <person name="Kengen S.W.M."/>
            <person name="Stams A.J.M."/>
        </authorList>
    </citation>
    <scope>PROTEIN SEQUENCE</scope>
    <scope>FUNCTION</scope>
    <scope>CATALYTIC ACTIVITY</scope>
    <scope>COFACTOR</scope>
    <scope>SUBUNIT</scope>
    <scope>SUBCELLULAR LOCATION</scope>
</reference>
<accession>P83448</accession>
<keyword id="KW-0004">4Fe-4S</keyword>
<keyword id="KW-0963">Cytoplasm</keyword>
<keyword id="KW-0903">Direct protein sequencing</keyword>
<keyword id="KW-0408">Iron</keyword>
<keyword id="KW-0411">Iron-sulfur</keyword>
<keyword id="KW-0479">Metal-binding</keyword>
<keyword id="KW-0500">Molybdenum</keyword>
<keyword id="KW-0560">Oxidoreductase</keyword>
<sequence length="19" mass="2166">LNMLEPVGETLASEYPYXK</sequence>
<organism>
    <name type="scientific">Stutzerimonas chloritidismutans</name>
    <name type="common">Pseudomonas chloritidismutans</name>
    <dbReference type="NCBI Taxonomy" id="203192"/>
    <lineage>
        <taxon>Bacteria</taxon>
        <taxon>Pseudomonadati</taxon>
        <taxon>Pseudomonadota</taxon>
        <taxon>Gammaproteobacteria</taxon>
        <taxon>Pseudomonadales</taxon>
        <taxon>Pseudomonadaceae</taxon>
        <taxon>Stutzerimonas</taxon>
    </lineage>
</organism>
<protein>
    <recommendedName>
        <fullName>Chlorate reductase subunit alpha</fullName>
        <ecNumber>1.97.1.1</ecNumber>
    </recommendedName>
</protein>
<evidence type="ECO:0000250" key="1"/>
<evidence type="ECO:0000269" key="2">
    <source>
    </source>
</evidence>
<evidence type="ECO:0000305" key="3">
    <source>
    </source>
</evidence>
<proteinExistence type="evidence at protein level"/>